<reference key="1">
    <citation type="journal article" date="2005" name="Science">
        <title>The genome of the basidiomycetous yeast and human pathogen Cryptococcus neoformans.</title>
        <authorList>
            <person name="Loftus B.J."/>
            <person name="Fung E."/>
            <person name="Roncaglia P."/>
            <person name="Rowley D."/>
            <person name="Amedeo P."/>
            <person name="Bruno D."/>
            <person name="Vamathevan J."/>
            <person name="Miranda M."/>
            <person name="Anderson I.J."/>
            <person name="Fraser J.A."/>
            <person name="Allen J.E."/>
            <person name="Bosdet I.E."/>
            <person name="Brent M.R."/>
            <person name="Chiu R."/>
            <person name="Doering T.L."/>
            <person name="Donlin M.J."/>
            <person name="D'Souza C.A."/>
            <person name="Fox D.S."/>
            <person name="Grinberg V."/>
            <person name="Fu J."/>
            <person name="Fukushima M."/>
            <person name="Haas B.J."/>
            <person name="Huang J.C."/>
            <person name="Janbon G."/>
            <person name="Jones S.J.M."/>
            <person name="Koo H.L."/>
            <person name="Krzywinski M.I."/>
            <person name="Kwon-Chung K.J."/>
            <person name="Lengeler K.B."/>
            <person name="Maiti R."/>
            <person name="Marra M.A."/>
            <person name="Marra R.E."/>
            <person name="Mathewson C.A."/>
            <person name="Mitchell T.G."/>
            <person name="Pertea M."/>
            <person name="Riggs F.R."/>
            <person name="Salzberg S.L."/>
            <person name="Schein J.E."/>
            <person name="Shvartsbeyn A."/>
            <person name="Shin H."/>
            <person name="Shumway M."/>
            <person name="Specht C.A."/>
            <person name="Suh B.B."/>
            <person name="Tenney A."/>
            <person name="Utterback T.R."/>
            <person name="Wickes B.L."/>
            <person name="Wortman J.R."/>
            <person name="Wye N.H."/>
            <person name="Kronstad J.W."/>
            <person name="Lodge J.K."/>
            <person name="Heitman J."/>
            <person name="Davis R.W."/>
            <person name="Fraser C.M."/>
            <person name="Hyman R.W."/>
        </authorList>
    </citation>
    <scope>NUCLEOTIDE SEQUENCE [LARGE SCALE GENOMIC DNA]</scope>
    <source>
        <strain>B-3501A</strain>
    </source>
</reference>
<accession>P0CR97</accession>
<accession>Q561F8</accession>
<accession>Q5KQ89</accession>
<gene>
    <name type="primary">TIM9</name>
    <name type="ordered locus">CNBA0110</name>
</gene>
<evidence type="ECO:0000250" key="1"/>
<evidence type="ECO:0000305" key="2"/>
<keyword id="KW-0143">Chaperone</keyword>
<keyword id="KW-1015">Disulfide bond</keyword>
<keyword id="KW-0472">Membrane</keyword>
<keyword id="KW-0479">Metal-binding</keyword>
<keyword id="KW-0496">Mitochondrion</keyword>
<keyword id="KW-0999">Mitochondrion inner membrane</keyword>
<keyword id="KW-0653">Protein transport</keyword>
<keyword id="KW-0811">Translocation</keyword>
<keyword id="KW-0813">Transport</keyword>
<keyword id="KW-0862">Zinc</keyword>
<name>TIM9_CRYNB</name>
<proteinExistence type="inferred from homology"/>
<protein>
    <recommendedName>
        <fullName>Mitochondrial import inner membrane translocase subunit TIM9</fullName>
    </recommendedName>
</protein>
<dbReference type="EMBL" id="AAEY01000001">
    <property type="protein sequence ID" value="EAL23357.1"/>
    <property type="molecule type" value="Genomic_DNA"/>
</dbReference>
<dbReference type="RefSeq" id="XP_778004.1">
    <property type="nucleotide sequence ID" value="XM_772911.1"/>
</dbReference>
<dbReference type="SMR" id="P0CR97"/>
<dbReference type="EnsemblFungi" id="AAW41258">
    <property type="protein sequence ID" value="AAW41258"/>
    <property type="gene ID" value="CNA00120"/>
</dbReference>
<dbReference type="GeneID" id="4933262"/>
<dbReference type="KEGG" id="cnb:CNBA0110"/>
<dbReference type="VEuPathDB" id="FungiDB:CNBA0110"/>
<dbReference type="HOGENOM" id="CLU_141397_3_0_1"/>
<dbReference type="OrthoDB" id="462at5206"/>
<dbReference type="GO" id="GO:0042719">
    <property type="term" value="C:mitochondrial intermembrane space protein transporter complex"/>
    <property type="evidence" value="ECO:0007669"/>
    <property type="project" value="EnsemblFungi"/>
</dbReference>
<dbReference type="GO" id="GO:0042721">
    <property type="term" value="C:TIM22 mitochondrial import inner membrane insertion complex"/>
    <property type="evidence" value="ECO:0007669"/>
    <property type="project" value="EnsemblFungi"/>
</dbReference>
<dbReference type="GO" id="GO:0046872">
    <property type="term" value="F:metal ion binding"/>
    <property type="evidence" value="ECO:0007669"/>
    <property type="project" value="UniProtKB-KW"/>
</dbReference>
<dbReference type="GO" id="GO:0140318">
    <property type="term" value="F:protein transporter activity"/>
    <property type="evidence" value="ECO:0007669"/>
    <property type="project" value="EnsemblFungi"/>
</dbReference>
<dbReference type="GO" id="GO:0051082">
    <property type="term" value="F:unfolded protein binding"/>
    <property type="evidence" value="ECO:0007669"/>
    <property type="project" value="EnsemblFungi"/>
</dbReference>
<dbReference type="GO" id="GO:0045039">
    <property type="term" value="P:protein insertion into mitochondrial inner membrane"/>
    <property type="evidence" value="ECO:0007669"/>
    <property type="project" value="EnsemblFungi"/>
</dbReference>
<dbReference type="Gene3D" id="1.10.287.810">
    <property type="entry name" value="Mitochondrial import inner membrane translocase subunit tim13 like domains"/>
    <property type="match status" value="1"/>
</dbReference>
<dbReference type="InterPro" id="IPR050673">
    <property type="entry name" value="Mito_inner_translocase_sub"/>
</dbReference>
<dbReference type="InterPro" id="IPR004217">
    <property type="entry name" value="Tim10-like"/>
</dbReference>
<dbReference type="InterPro" id="IPR035427">
    <property type="entry name" value="Tim10-like_dom_sf"/>
</dbReference>
<dbReference type="PANTHER" id="PTHR13172">
    <property type="entry name" value="MITOCHONDRIAL IMPORT INNER MEMBRANE TRANSLOCASE SUBUNIT TIM9B"/>
    <property type="match status" value="1"/>
</dbReference>
<dbReference type="Pfam" id="PF02953">
    <property type="entry name" value="zf-Tim10_DDP"/>
    <property type="match status" value="1"/>
</dbReference>
<dbReference type="SUPFAM" id="SSF144122">
    <property type="entry name" value="Tim10-like"/>
    <property type="match status" value="1"/>
</dbReference>
<comment type="function">
    <text evidence="1">Mitochondrial intermembrane chaperone that participates in the import and insertion of multi-pass transmembrane proteins into the mitochondrial inner membrane. Also required for the transfer of beta-barrel precursors from the TOM complex to the sorting and assembly machinery (SAM complex) of the outer membrane. Acts as a chaperone-like protein that protects the hydrophobic precursors from aggregation and guide them through the mitochondrial intermembrane space (By similarity).</text>
</comment>
<comment type="subunit">
    <text evidence="1">Heterohexamer; composed of 3 copies of TIM9 and 3 copies of TIM10, named soluble 70 kDa complex. Associates with the TIM22 complex, whose core is composed of TIM22 and TIM54. Interacts with the transmembrane regions of multi-pass transmembrane proteins in transit (By similarity).</text>
</comment>
<comment type="subcellular location">
    <subcellularLocation>
        <location evidence="1">Mitochondrion inner membrane</location>
        <topology evidence="1">Peripheral membrane protein</topology>
        <orientation evidence="1">Intermembrane side</orientation>
    </subcellularLocation>
</comment>
<comment type="domain">
    <text evidence="1">The twin CX3C motif contains 4 conserved Cys residues that form 2 disulfide bonds in the mitochondrial intermembrane space. However, during the transit of TIM9 from cytoplasm into mitochondrion, the Cys residues probably coordinate zinc, thereby preventing folding and allowing its transfer across mitochondrial outer membrane (By similarity).</text>
</comment>
<comment type="similarity">
    <text evidence="2">Belongs to the small Tim family.</text>
</comment>
<sequence>MDFSQFNGAEQAHMSKVIEKKQMQDFMRLYSGLVEKCFNACAQDFTSKALTTNETTCVQNCTDKFLKHSERVGARFAEHNAEQMQGAGQ</sequence>
<organism>
    <name type="scientific">Cryptococcus neoformans var. neoformans serotype D (strain B-3501A)</name>
    <name type="common">Filobasidiella neoformans</name>
    <dbReference type="NCBI Taxonomy" id="283643"/>
    <lineage>
        <taxon>Eukaryota</taxon>
        <taxon>Fungi</taxon>
        <taxon>Dikarya</taxon>
        <taxon>Basidiomycota</taxon>
        <taxon>Agaricomycotina</taxon>
        <taxon>Tremellomycetes</taxon>
        <taxon>Tremellales</taxon>
        <taxon>Cryptococcaceae</taxon>
        <taxon>Cryptococcus</taxon>
        <taxon>Cryptococcus neoformans species complex</taxon>
    </lineage>
</organism>
<feature type="chain" id="PRO_0000410310" description="Mitochondrial import inner membrane translocase subunit TIM9">
    <location>
        <begin position="1"/>
        <end position="89"/>
    </location>
</feature>
<feature type="short sequence motif" description="Twin CX3C motif">
    <location>
        <begin position="37"/>
        <end position="61"/>
    </location>
</feature>
<feature type="disulfide bond" evidence="1">
    <location>
        <begin position="37"/>
        <end position="61"/>
    </location>
</feature>
<feature type="disulfide bond" evidence="1">
    <location>
        <begin position="41"/>
        <end position="57"/>
    </location>
</feature>